<comment type="function">
    <text evidence="4 5">Catalyzes the conversion of monodehydroascorbate to ascorbate, oxidizing NADH in the process (PubMed:16146528). Involved in the detoxification of H(2)O(2) that escapes the peroxisome and causes oxidative damage to oil bodies (PubMed:17449810).</text>
</comment>
<comment type="catalytic activity">
    <reaction evidence="7">
        <text>2 monodehydro-L-ascorbate radical + NADH + H(+) = 2 L-ascorbate + NAD(+)</text>
        <dbReference type="Rhea" id="RHEA:14581"/>
        <dbReference type="ChEBI" id="CHEBI:15378"/>
        <dbReference type="ChEBI" id="CHEBI:38290"/>
        <dbReference type="ChEBI" id="CHEBI:57540"/>
        <dbReference type="ChEBI" id="CHEBI:57945"/>
        <dbReference type="ChEBI" id="CHEBI:59513"/>
        <dbReference type="EC" id="1.6.5.4"/>
    </reaction>
</comment>
<comment type="cofactor">
    <cofactor evidence="2">
        <name>FAD</name>
        <dbReference type="ChEBI" id="CHEBI:57692"/>
    </cofactor>
</comment>
<comment type="subcellular location">
    <subcellularLocation>
        <location evidence="4">Peroxisome membrane</location>
        <topology evidence="3">Multi-pass membrane protein</topology>
    </subcellularLocation>
</comment>
<comment type="domain">
    <text evidence="4">The C-terminal domain (451-488) is necessary and sufficient for peroxisomal targeting.</text>
</comment>
<comment type="disruption phenotype">
    <text evidence="5">Conditional seedling-lethal phenotype due to the unability of the seeds to break down storage oil to provide carbon skeletons and energy for early seedling growth.</text>
</comment>
<comment type="similarity">
    <text evidence="7">Belongs to the FAD-dependent oxidoreductase family.</text>
</comment>
<name>MDAR4_ARATH</name>
<protein>
    <recommendedName>
        <fullName evidence="6">Monodehydroascorbate reductase 4, peroxisomal</fullName>
        <shortName evidence="6">AtMDAR4</shortName>
        <ecNumber evidence="7">1.6.5.4</ecNumber>
    </recommendedName>
</protein>
<reference key="1">
    <citation type="journal article" date="2000" name="DNA Res.">
        <title>Structural analysis of Arabidopsis thaliana chromosome 3. II. Sequence features of the 4,251,695 bp regions covered by 90 P1, TAC and BAC clones.</title>
        <authorList>
            <person name="Kaneko T."/>
            <person name="Katoh T."/>
            <person name="Sato S."/>
            <person name="Nakamura Y."/>
            <person name="Asamizu E."/>
            <person name="Tabata S."/>
        </authorList>
    </citation>
    <scope>NUCLEOTIDE SEQUENCE [LARGE SCALE GENOMIC DNA]</scope>
    <source>
        <strain>cv. Columbia</strain>
    </source>
</reference>
<reference key="2">
    <citation type="journal article" date="2017" name="Plant J.">
        <title>Araport11: a complete reannotation of the Arabidopsis thaliana reference genome.</title>
        <authorList>
            <person name="Cheng C.Y."/>
            <person name="Krishnakumar V."/>
            <person name="Chan A.P."/>
            <person name="Thibaud-Nissen F."/>
            <person name="Schobel S."/>
            <person name="Town C.D."/>
        </authorList>
    </citation>
    <scope>GENOME REANNOTATION</scope>
    <source>
        <strain>cv. Columbia</strain>
    </source>
</reference>
<reference key="3">
    <citation type="journal article" date="2003" name="Science">
        <title>Empirical analysis of transcriptional activity in the Arabidopsis genome.</title>
        <authorList>
            <person name="Yamada K."/>
            <person name="Lim J."/>
            <person name="Dale J.M."/>
            <person name="Chen H."/>
            <person name="Shinn P."/>
            <person name="Palm C.J."/>
            <person name="Southwick A.M."/>
            <person name="Wu H.C."/>
            <person name="Kim C.J."/>
            <person name="Nguyen M."/>
            <person name="Pham P.K."/>
            <person name="Cheuk R.F."/>
            <person name="Karlin-Newmann G."/>
            <person name="Liu S.X."/>
            <person name="Lam B."/>
            <person name="Sakano H."/>
            <person name="Wu T."/>
            <person name="Yu G."/>
            <person name="Miranda M."/>
            <person name="Quach H.L."/>
            <person name="Tripp M."/>
            <person name="Chang C.H."/>
            <person name="Lee J.M."/>
            <person name="Toriumi M.J."/>
            <person name="Chan M.M."/>
            <person name="Tang C.C."/>
            <person name="Onodera C.S."/>
            <person name="Deng J.M."/>
            <person name="Akiyama K."/>
            <person name="Ansari Y."/>
            <person name="Arakawa T."/>
            <person name="Banh J."/>
            <person name="Banno F."/>
            <person name="Bowser L."/>
            <person name="Brooks S.Y."/>
            <person name="Carninci P."/>
            <person name="Chao Q."/>
            <person name="Choy N."/>
            <person name="Enju A."/>
            <person name="Goldsmith A.D."/>
            <person name="Gurjal M."/>
            <person name="Hansen N.F."/>
            <person name="Hayashizaki Y."/>
            <person name="Johnson-Hopson C."/>
            <person name="Hsuan V.W."/>
            <person name="Iida K."/>
            <person name="Karnes M."/>
            <person name="Khan S."/>
            <person name="Koesema E."/>
            <person name="Ishida J."/>
            <person name="Jiang P.X."/>
            <person name="Jones T."/>
            <person name="Kawai J."/>
            <person name="Kamiya A."/>
            <person name="Meyers C."/>
            <person name="Nakajima M."/>
            <person name="Narusaka M."/>
            <person name="Seki M."/>
            <person name="Sakurai T."/>
            <person name="Satou M."/>
            <person name="Tamse R."/>
            <person name="Vaysberg M."/>
            <person name="Wallender E.K."/>
            <person name="Wong C."/>
            <person name="Yamamura Y."/>
            <person name="Yuan S."/>
            <person name="Shinozaki K."/>
            <person name="Davis R.W."/>
            <person name="Theologis A."/>
            <person name="Ecker J.R."/>
        </authorList>
    </citation>
    <scope>NUCLEOTIDE SEQUENCE [LARGE SCALE MRNA]</scope>
    <source>
        <strain>cv. Columbia</strain>
    </source>
</reference>
<reference key="4">
    <citation type="journal article" date="2005" name="Plant J.">
        <title>Arabidopsis peroxisomes possess functionally redundant membrane and matrix isoforms of monodehydroascorbate reductase.</title>
        <authorList>
            <person name="Lisenbee C.S."/>
            <person name="Lingard M.J."/>
            <person name="Trelease R.N."/>
        </authorList>
    </citation>
    <scope>FUNCTION</scope>
    <scope>GENE FAMILY</scope>
    <scope>NOMENCLATURE</scope>
    <scope>SUBCELLULAR LOCATION</scope>
    <scope>TOPOLOGY</scope>
    <scope>MUTAGENESIS OF 483-ARG--TRP-488</scope>
    <scope>DOMAIN</scope>
</reference>
<reference key="5">
    <citation type="journal article" date="2007" name="Plant Cell">
        <title>MONODEHYROASCORBATE REDUCTASE4 is required for seed storage oil hydrolysis and postgerminative growth in Arabidopsis.</title>
        <authorList>
            <person name="Eastmond P.J."/>
        </authorList>
    </citation>
    <scope>FUNCTION</scope>
    <scope>MUTAGENESIS OF GLY-11; VAL-14 AND GLY-386</scope>
    <scope>DISRUPTION PHENOTYPE</scope>
</reference>
<organism>
    <name type="scientific">Arabidopsis thaliana</name>
    <name type="common">Mouse-ear cress</name>
    <dbReference type="NCBI Taxonomy" id="3702"/>
    <lineage>
        <taxon>Eukaryota</taxon>
        <taxon>Viridiplantae</taxon>
        <taxon>Streptophyta</taxon>
        <taxon>Embryophyta</taxon>
        <taxon>Tracheophyta</taxon>
        <taxon>Spermatophyta</taxon>
        <taxon>Magnoliopsida</taxon>
        <taxon>eudicotyledons</taxon>
        <taxon>Gunneridae</taxon>
        <taxon>Pentapetalae</taxon>
        <taxon>rosids</taxon>
        <taxon>malvids</taxon>
        <taxon>Brassicales</taxon>
        <taxon>Brassicaceae</taxon>
        <taxon>Camelineae</taxon>
        <taxon>Arabidopsis</taxon>
    </lineage>
</organism>
<evidence type="ECO:0000250" key="1">
    <source>
        <dbReference type="UniProtKB" id="Q652L6"/>
    </source>
</evidence>
<evidence type="ECO:0000250" key="2">
    <source>
        <dbReference type="UniProtKB" id="Q9S926"/>
    </source>
</evidence>
<evidence type="ECO:0000255" key="3"/>
<evidence type="ECO:0000269" key="4">
    <source>
    </source>
</evidence>
<evidence type="ECO:0000269" key="5">
    <source>
    </source>
</evidence>
<evidence type="ECO:0000303" key="6">
    <source>
    </source>
</evidence>
<evidence type="ECO:0000305" key="7"/>
<evidence type="ECO:0000312" key="8">
    <source>
        <dbReference type="Araport" id="AT3G27820"/>
    </source>
</evidence>
<evidence type="ECO:0000312" key="9">
    <source>
        <dbReference type="EMBL" id="BAB02528.1"/>
    </source>
</evidence>
<proteinExistence type="evidence at protein level"/>
<feature type="chain" id="PRO_0000209137" description="Monodehydroascorbate reductase 4, peroxisomal" evidence="3">
    <location>
        <begin position="1"/>
        <end position="488"/>
    </location>
</feature>
<feature type="topological domain" description="Cytoplasmic" evidence="4">
    <location>
        <begin position="1"/>
        <end position="3"/>
    </location>
</feature>
<feature type="transmembrane region" description="Helical" evidence="3">
    <location>
        <begin position="4"/>
        <end position="24"/>
    </location>
</feature>
<feature type="topological domain" description="Peroxisomal" evidence="7">
    <location>
        <begin position="25"/>
        <end position="458"/>
    </location>
</feature>
<feature type="transmembrane region" description="Helical" evidence="3">
    <location>
        <begin position="459"/>
        <end position="479"/>
    </location>
</feature>
<feature type="topological domain" description="Cytoplasmic" evidence="7">
    <location>
        <begin position="480"/>
        <end position="488"/>
    </location>
</feature>
<feature type="binding site" evidence="1">
    <location>
        <begin position="12"/>
        <end position="15"/>
    </location>
    <ligand>
        <name>FAD</name>
        <dbReference type="ChEBI" id="CHEBI:57692"/>
    </ligand>
</feature>
<feature type="binding site" evidence="1">
    <location>
        <position position="39"/>
    </location>
    <ligand>
        <name>FAD</name>
        <dbReference type="ChEBI" id="CHEBI:57692"/>
    </ligand>
</feature>
<feature type="binding site" evidence="1">
    <location>
        <position position="46"/>
    </location>
    <ligand>
        <name>FAD</name>
        <dbReference type="ChEBI" id="CHEBI:57692"/>
    </ligand>
</feature>
<feature type="binding site" evidence="1">
    <location>
        <position position="51"/>
    </location>
    <ligand>
        <name>FAD</name>
        <dbReference type="ChEBI" id="CHEBI:57692"/>
    </ligand>
</feature>
<feature type="binding site" evidence="1">
    <location>
        <begin position="145"/>
        <end position="146"/>
    </location>
    <ligand>
        <name>FAD</name>
        <dbReference type="ChEBI" id="CHEBI:57692"/>
    </ligand>
</feature>
<feature type="binding site" evidence="1">
    <location>
        <begin position="170"/>
        <end position="176"/>
    </location>
    <ligand>
        <name>NAD(+)</name>
        <dbReference type="ChEBI" id="CHEBI:57540"/>
    </ligand>
</feature>
<feature type="binding site" evidence="1">
    <location>
        <begin position="172"/>
        <end position="176"/>
    </location>
    <ligand>
        <name>NADP(+)</name>
        <dbReference type="ChEBI" id="CHEBI:58349"/>
    </ligand>
</feature>
<feature type="binding site" evidence="1">
    <location>
        <position position="194"/>
    </location>
    <ligand>
        <name>NAD(+)</name>
        <dbReference type="ChEBI" id="CHEBI:57540"/>
    </ligand>
</feature>
<feature type="binding site" evidence="1">
    <location>
        <position position="200"/>
    </location>
    <ligand>
        <name>NAD(+)</name>
        <dbReference type="ChEBI" id="CHEBI:57540"/>
    </ligand>
</feature>
<feature type="binding site" evidence="1">
    <location>
        <position position="200"/>
    </location>
    <ligand>
        <name>NADP(+)</name>
        <dbReference type="ChEBI" id="CHEBI:58349"/>
    </ligand>
</feature>
<feature type="binding site" evidence="1">
    <location>
        <position position="259"/>
    </location>
    <ligand>
        <name>NAD(+)</name>
        <dbReference type="ChEBI" id="CHEBI:57540"/>
    </ligand>
</feature>
<feature type="binding site" evidence="1">
    <location>
        <position position="259"/>
    </location>
    <ligand>
        <name>NADP(+)</name>
        <dbReference type="ChEBI" id="CHEBI:58349"/>
    </ligand>
</feature>
<feature type="binding site" evidence="1">
    <location>
        <position position="296"/>
    </location>
    <ligand>
        <name>FAD</name>
        <dbReference type="ChEBI" id="CHEBI:57692"/>
    </ligand>
</feature>
<feature type="binding site" evidence="1">
    <location>
        <begin position="312"/>
        <end position="313"/>
    </location>
    <ligand>
        <name>NAD(+)</name>
        <dbReference type="ChEBI" id="CHEBI:57540"/>
    </ligand>
</feature>
<feature type="binding site" evidence="1">
    <location>
        <begin position="312"/>
        <end position="313"/>
    </location>
    <ligand>
        <name>NADP(+)</name>
        <dbReference type="ChEBI" id="CHEBI:58349"/>
    </ligand>
</feature>
<feature type="binding site" evidence="1">
    <location>
        <position position="314"/>
    </location>
    <ligand>
        <name>FAD</name>
        <dbReference type="ChEBI" id="CHEBI:57692"/>
    </ligand>
</feature>
<feature type="binding site" evidence="1">
    <location>
        <position position="318"/>
    </location>
    <ligand>
        <name>L-ascorbate</name>
        <dbReference type="ChEBI" id="CHEBI:38290"/>
    </ligand>
</feature>
<feature type="binding site" evidence="1">
    <location>
        <position position="344"/>
    </location>
    <ligand>
        <name>FAD</name>
        <dbReference type="ChEBI" id="CHEBI:57692"/>
    </ligand>
</feature>
<feature type="binding site" evidence="1">
    <location>
        <position position="344"/>
    </location>
    <ligand>
        <name>NAD(+)</name>
        <dbReference type="ChEBI" id="CHEBI:57540"/>
    </ligand>
</feature>
<feature type="binding site" evidence="1">
    <location>
        <position position="344"/>
    </location>
    <ligand>
        <name>NADP(+)</name>
        <dbReference type="ChEBI" id="CHEBI:58349"/>
    </ligand>
</feature>
<feature type="binding site" evidence="1">
    <location>
        <position position="346"/>
    </location>
    <ligand>
        <name>L-ascorbate</name>
        <dbReference type="ChEBI" id="CHEBI:38290"/>
    </ligand>
</feature>
<feature type="mutagenesis site" description="In sdp2-2; loss of ascorbate recycling." evidence="5">
    <original>G</original>
    <variation>Q</variation>
    <location>
        <position position="11"/>
    </location>
</feature>
<feature type="mutagenesis site" description="In sdp2-1; loss of ascorbate recycling." evidence="5">
    <original>V</original>
    <variation>A</variation>
    <location>
        <position position="14"/>
    </location>
</feature>
<feature type="mutagenesis site" description="In sdp2-3; loss of ascorbate recycling." evidence="5">
    <original>G</original>
    <variation>Q</variation>
    <location>
        <position position="386"/>
    </location>
</feature>
<feature type="mutagenesis site" description="Loss of peroxisomal targeting." evidence="4">
    <location>
        <begin position="483"/>
        <end position="488"/>
    </location>
</feature>
<feature type="mutagenesis site" description="No effect on peroxisomal targeting." evidence="4">
    <location>
        <position position="488"/>
    </location>
</feature>
<dbReference type="EC" id="1.6.5.4" evidence="7"/>
<dbReference type="EMBL" id="AP000371">
    <property type="protein sequence ID" value="BAB02528.1"/>
    <property type="molecule type" value="Genomic_DNA"/>
</dbReference>
<dbReference type="EMBL" id="CP002686">
    <property type="protein sequence ID" value="AEE77367.1"/>
    <property type="molecule type" value="Genomic_DNA"/>
</dbReference>
<dbReference type="EMBL" id="AY039980">
    <property type="protein sequence ID" value="AAK64157.1"/>
    <property type="molecule type" value="mRNA"/>
</dbReference>
<dbReference type="EMBL" id="AY133800">
    <property type="protein sequence ID" value="AAM91734.1"/>
    <property type="molecule type" value="mRNA"/>
</dbReference>
<dbReference type="RefSeq" id="NP_189420.1">
    <property type="nucleotide sequence ID" value="NM_113698.4"/>
</dbReference>
<dbReference type="SMR" id="Q9LK94"/>
<dbReference type="FunCoup" id="Q9LK94">
    <property type="interactions" value="1166"/>
</dbReference>
<dbReference type="STRING" id="3702.Q9LK94"/>
<dbReference type="iPTMnet" id="Q9LK94"/>
<dbReference type="PaxDb" id="3702-AT3G27820.1"/>
<dbReference type="ProteomicsDB" id="238244"/>
<dbReference type="EnsemblPlants" id="AT3G27820.1">
    <property type="protein sequence ID" value="AT3G27820.1"/>
    <property type="gene ID" value="AT3G27820"/>
</dbReference>
<dbReference type="GeneID" id="822402"/>
<dbReference type="Gramene" id="AT3G27820.1">
    <property type="protein sequence ID" value="AT3G27820.1"/>
    <property type="gene ID" value="AT3G27820"/>
</dbReference>
<dbReference type="KEGG" id="ath:AT3G27820"/>
<dbReference type="Araport" id="AT3G27820"/>
<dbReference type="TAIR" id="AT3G27820">
    <property type="gene designation" value="MDAR4"/>
</dbReference>
<dbReference type="eggNOG" id="KOG1336">
    <property type="taxonomic scope" value="Eukaryota"/>
</dbReference>
<dbReference type="HOGENOM" id="CLU_003291_4_1_1"/>
<dbReference type="InParanoid" id="Q9LK94"/>
<dbReference type="OMA" id="DVARWHN"/>
<dbReference type="OrthoDB" id="432169at2759"/>
<dbReference type="PhylomeDB" id="Q9LK94"/>
<dbReference type="BioCyc" id="ARA:AT3G27820-MONOMER"/>
<dbReference type="BRENDA" id="1.6.5.4">
    <property type="organism ID" value="399"/>
</dbReference>
<dbReference type="PRO" id="PR:Q9LK94"/>
<dbReference type="Proteomes" id="UP000006548">
    <property type="component" value="Chromosome 3"/>
</dbReference>
<dbReference type="ExpressionAtlas" id="Q9LK94">
    <property type="expression patterns" value="baseline and differential"/>
</dbReference>
<dbReference type="GO" id="GO:0009941">
    <property type="term" value="C:chloroplast envelope"/>
    <property type="evidence" value="ECO:0007005"/>
    <property type="project" value="TAIR"/>
</dbReference>
<dbReference type="GO" id="GO:0005778">
    <property type="term" value="C:peroxisomal membrane"/>
    <property type="evidence" value="ECO:0000314"/>
    <property type="project" value="TAIR"/>
</dbReference>
<dbReference type="GO" id="GO:0016656">
    <property type="term" value="F:monodehydroascorbate reductase (NADH) activity"/>
    <property type="evidence" value="ECO:0000314"/>
    <property type="project" value="TAIR"/>
</dbReference>
<dbReference type="GO" id="GO:0042744">
    <property type="term" value="P:hydrogen peroxide catabolic process"/>
    <property type="evidence" value="ECO:0000315"/>
    <property type="project" value="TAIR"/>
</dbReference>
<dbReference type="FunFam" id="3.50.50.60:FF:000155">
    <property type="entry name" value="Monodehydroascorbate reductase 3"/>
    <property type="match status" value="1"/>
</dbReference>
<dbReference type="Gene3D" id="3.30.390.30">
    <property type="match status" value="1"/>
</dbReference>
<dbReference type="Gene3D" id="3.50.50.60">
    <property type="entry name" value="FAD/NAD(P)-binding domain"/>
    <property type="match status" value="2"/>
</dbReference>
<dbReference type="InterPro" id="IPR050446">
    <property type="entry name" value="FAD-oxidoreductase/Apoptosis"/>
</dbReference>
<dbReference type="InterPro" id="IPR036188">
    <property type="entry name" value="FAD/NAD-bd_sf"/>
</dbReference>
<dbReference type="InterPro" id="IPR023753">
    <property type="entry name" value="FAD/NAD-binding_dom"/>
</dbReference>
<dbReference type="InterPro" id="IPR016156">
    <property type="entry name" value="FAD/NAD-linked_Rdtase_dimer_sf"/>
</dbReference>
<dbReference type="InterPro" id="IPR048618">
    <property type="entry name" value="MDHAR3-like_C"/>
</dbReference>
<dbReference type="PANTHER" id="PTHR43557">
    <property type="entry name" value="APOPTOSIS-INDUCING FACTOR 1"/>
    <property type="match status" value="1"/>
</dbReference>
<dbReference type="PANTHER" id="PTHR43557:SF2">
    <property type="entry name" value="RIESKE DOMAIN-CONTAINING PROTEIN-RELATED"/>
    <property type="match status" value="1"/>
</dbReference>
<dbReference type="Pfam" id="PF21791">
    <property type="entry name" value="MDHAR3-like_C"/>
    <property type="match status" value="1"/>
</dbReference>
<dbReference type="Pfam" id="PF07992">
    <property type="entry name" value="Pyr_redox_2"/>
    <property type="match status" value="1"/>
</dbReference>
<dbReference type="PRINTS" id="PR00368">
    <property type="entry name" value="FADPNR"/>
</dbReference>
<dbReference type="PRINTS" id="PR00411">
    <property type="entry name" value="PNDRDTASEI"/>
</dbReference>
<dbReference type="SUPFAM" id="SSF51905">
    <property type="entry name" value="FAD/NAD(P)-binding domain"/>
    <property type="match status" value="2"/>
</dbReference>
<dbReference type="SUPFAM" id="SSF55424">
    <property type="entry name" value="FAD/NAD-linked reductases, dimerisation (C-terminal) domain"/>
    <property type="match status" value="1"/>
</dbReference>
<accession>Q9LK94</accession>
<keyword id="KW-0274">FAD</keyword>
<keyword id="KW-0285">Flavoprotein</keyword>
<keyword id="KW-0472">Membrane</keyword>
<keyword id="KW-0520">NAD</keyword>
<keyword id="KW-0521">NADP</keyword>
<keyword id="KW-0560">Oxidoreductase</keyword>
<keyword id="KW-0576">Peroxisome</keyword>
<keyword id="KW-0676">Redox-active center</keyword>
<keyword id="KW-1185">Reference proteome</keyword>
<keyword id="KW-0812">Transmembrane</keyword>
<keyword id="KW-1133">Transmembrane helix</keyword>
<gene>
    <name evidence="6" type="primary">MDAR4</name>
    <name evidence="8" type="ordered locus">At3g27820</name>
    <name evidence="9" type="ORF">K16N12.2</name>
</gene>
<sequence>MGRAFVYVILGGGVAAGYAALEFTRRGVSDGELCIISEEPVAPYERPALSKGFLLPEAPARLPSFHTCVGANDEKLTPKWYKDHGIELVLGTRVKSVDVRRKTLLSSTGETISYKFLIIATGARALKLEEFGVEGSDAENVCYLRDLADANRLATVIQSSSNGNAVVIGGGYIGMECAASLVINKINVTMVFPEAHCMARLFTPKIASLYEDYYRAKGVKFIKGTVLTSFEFDSNKKVTAVNLKDGSHLPADLVVVGIGIRPNTSLFEGQLTIEKGGIKVNSRMQSSDSSVYAIGDVATFPVKLFGEMRRLEHVDSARKSARHAVSAIMDPIKTGDFDYLPFFYSRVFAFSWQFYGDPTGDVVHFGEYEDGKSFGAYWVKKGHLVGSFLEGGTKEEYETISKATQLKPAVTIDLEELEREGLGFAHTVVSQQKVPEVKDIPSAEMVKQSASVVMIKKPLYVWHAATGVVVAASVAAFAFWYGRRRRRW</sequence>